<comment type="function">
    <text evidence="7 9">Cysteine proteinase with a strong preference for substrates with Lys in the P1 position. Hydrolyzes bovine hemoglobin, bovine serum albumin, casein, human placental type I collagen and human IgA and IgG. Disrupts the functions of polymorphonuclear leukocytes. May act as a virulence factor in the development of peridontal disease. Involved in the coaggregation of P.gingivalis with other oral bacteria.</text>
</comment>
<comment type="catalytic activity">
    <reaction evidence="8 9">
        <text>Endopeptidase with strict specificity for lysyl bonds.</text>
        <dbReference type="EC" id="3.4.22.47"/>
    </reaction>
</comment>
<comment type="activity regulation">
    <text evidence="9">Activated by the thiol-reducing agents cysteine, 2-mercaptoethanol and dithiothreitol. Inhibited by iodacetamide, iodoacetic acid, leupeptin, tosyl-L-lysine and tosyl-L-phenylalanine. Not inhibited by elastatinal, chymostatin, cystatins, alpha1-antichymotrypsin or the serine protease inhibitors phenylmethylsulfonyl fluoride and diisopropylfluorophosphate. Not inhibited by metal ion chelators. Inhibited by the heavy metal ions Fe(3+), Zn(2+), Cu(2+) and Mn(2+).</text>
</comment>
<comment type="biophysicochemical properties">
    <phDependence>
        <text evidence="9">Optimum pH is 7.5. Activity remains high from pH 6.5 to 9.5. Loses 60% of its activity following incubation at pH 3.5 for 5 minutes.</text>
    </phDependence>
    <temperatureDependence>
        <text evidence="9">Only retains 40% of activity after incubation at 60 degrees Celsius for 10 minutes.</text>
    </temperatureDependence>
</comment>
<comment type="subcellular location">
    <molecule>Lys-gingipain catalytic subunit</molecule>
    <subcellularLocation>
        <location evidence="1">Secreted</location>
    </subcellularLocation>
</comment>
<comment type="PTM">
    <text evidence="1 3">Proteolytically cleaved into a catalytic subunit and three adhesins. Arg-gingipain is involved in this post-translational processing (By similarity).</text>
</comment>
<comment type="polymorphism">
    <text evidence="6">Several forms of kgp with differences at the C-terminus exist in different P.gingivalis strains.</text>
</comment>
<comment type="similarity">
    <text evidence="4">Belongs to the peptidase C25 family.</text>
</comment>
<proteinExistence type="evidence at protein level"/>
<protein>
    <recommendedName>
        <fullName evidence="10">Lys-gingipain</fullName>
        <ecNumber evidence="8 9">3.4.22.47</ecNumber>
    </recommendedName>
    <alternativeName>
        <fullName evidence="10 12">Lysine-specific cysteine proteinase Kgp</fullName>
    </alternativeName>
    <component>
        <recommendedName>
            <fullName evidence="3 10">Lys-gingipain catalytic subunit</fullName>
        </recommendedName>
    </component>
    <component>
        <recommendedName>
            <fullName evidence="3">39 kDa adhesin</fullName>
        </recommendedName>
    </component>
    <component>
        <recommendedName>
            <fullName evidence="3">15 kDa adhesin</fullName>
        </recommendedName>
    </component>
    <component>
        <recommendedName>
            <fullName evidence="3">44 kDa adhesin</fullName>
        </recommendedName>
    </component>
</protein>
<feature type="signal peptide" evidence="4">
    <location>
        <begin position="1"/>
        <end position="24"/>
    </location>
</feature>
<feature type="propeptide" id="PRO_0000395387" evidence="3 4">
    <location>
        <begin position="25"/>
        <end position="228"/>
    </location>
</feature>
<feature type="chain" id="PRO_0000395388" description="Lys-gingipain" evidence="3">
    <location>
        <begin position="229"/>
        <end position="1723"/>
    </location>
</feature>
<feature type="chain" id="PRO_0000395389" description="Lys-gingipain catalytic subunit" evidence="3">
    <location>
        <begin position="229"/>
        <end status="unknown"/>
    </location>
</feature>
<feature type="chain" id="PRO_0000395390" description="39 kDa adhesin" evidence="3">
    <location>
        <begin position="738"/>
        <end status="unknown"/>
    </location>
</feature>
<feature type="chain" id="PRO_0000395391" description="15 kDa adhesin" evidence="3">
    <location>
        <begin position="1156"/>
        <end status="unknown"/>
    </location>
</feature>
<feature type="chain" id="PRO_0000395392" description="44 kDa adhesin" evidence="3">
    <location>
        <begin position="1291"/>
        <end status="unknown"/>
    </location>
</feature>
<feature type="region of interest" description="Disordered" evidence="5">
    <location>
        <begin position="964"/>
        <end position="985"/>
    </location>
</feature>
<feature type="active site" description="Proton donor" evidence="2">
    <location>
        <position position="444"/>
    </location>
</feature>
<feature type="active site" description="Nucleophile" evidence="8">
    <location>
        <position position="477"/>
    </location>
</feature>
<feature type="binding site" evidence="3">
    <location>
        <position position="313"/>
    </location>
    <ligand>
        <name>Ca(2+)</name>
        <dbReference type="ChEBI" id="CHEBI:29108"/>
        <label>1</label>
    </ligand>
</feature>
<feature type="binding site" evidence="3">
    <location>
        <position position="337"/>
    </location>
    <ligand>
        <name>Ca(2+)</name>
        <dbReference type="ChEBI" id="CHEBI:29108"/>
        <label>2</label>
    </ligand>
</feature>
<feature type="binding site" evidence="3">
    <location>
        <position position="339"/>
    </location>
    <ligand>
        <name>Ca(2+)</name>
        <dbReference type="ChEBI" id="CHEBI:29108"/>
        <label>2</label>
    </ligand>
</feature>
<feature type="binding site" evidence="3">
    <location>
        <position position="341"/>
    </location>
    <ligand>
        <name>Ca(2+)</name>
        <dbReference type="ChEBI" id="CHEBI:29108"/>
        <label>2</label>
    </ligand>
</feature>
<feature type="binding site" evidence="3">
    <location>
        <position position="343"/>
    </location>
    <ligand>
        <name>Ca(2+)</name>
        <dbReference type="ChEBI" id="CHEBI:29108"/>
        <label>2</label>
    </ligand>
</feature>
<feature type="binding site" evidence="3">
    <location>
        <position position="482"/>
    </location>
    <ligand>
        <name>Ca(2+)</name>
        <dbReference type="ChEBI" id="CHEBI:29108"/>
        <label>1</label>
    </ligand>
</feature>
<feature type="binding site" evidence="3">
    <location>
        <position position="491"/>
    </location>
    <ligand>
        <name>Ca(2+)</name>
        <dbReference type="ChEBI" id="CHEBI:29108"/>
        <label>1</label>
    </ligand>
</feature>
<feature type="binding site" evidence="3">
    <location>
        <position position="987"/>
    </location>
    <ligand>
        <name>Ca(2+)</name>
        <dbReference type="ChEBI" id="CHEBI:29108"/>
        <label>3</label>
    </ligand>
</feature>
<feature type="binding site" evidence="3">
    <location>
        <position position="989"/>
    </location>
    <ligand>
        <name>Ca(2+)</name>
        <dbReference type="ChEBI" id="CHEBI:29108"/>
        <label>3</label>
    </ligand>
</feature>
<feature type="binding site" evidence="3">
    <location>
        <position position="1000"/>
    </location>
    <ligand>
        <name>Ca(2+)</name>
        <dbReference type="ChEBI" id="CHEBI:29108"/>
        <label>4</label>
    </ligand>
</feature>
<feature type="binding site" evidence="3">
    <location>
        <position position="1002"/>
    </location>
    <ligand>
        <name>Ca(2+)</name>
        <dbReference type="ChEBI" id="CHEBI:29108"/>
        <label>4</label>
    </ligand>
</feature>
<feature type="binding site" evidence="3">
    <location>
        <position position="1004"/>
    </location>
    <ligand>
        <name>Ca(2+)</name>
        <dbReference type="ChEBI" id="CHEBI:29108"/>
        <label>4</label>
    </ligand>
</feature>
<feature type="binding site" evidence="3">
    <location>
        <position position="1006"/>
    </location>
    <ligand>
        <name>Ca(2+)</name>
        <dbReference type="ChEBI" id="CHEBI:29108"/>
        <label>4</label>
    </ligand>
</feature>
<feature type="binding site" evidence="3">
    <location>
        <position position="1021"/>
    </location>
    <ligand>
        <name>Ca(2+)</name>
        <dbReference type="ChEBI" id="CHEBI:29108"/>
        <label>3</label>
    </ligand>
</feature>
<feature type="binding site" evidence="3">
    <location>
        <position position="1023"/>
    </location>
    <ligand>
        <name>Ca(2+)</name>
        <dbReference type="ChEBI" id="CHEBI:29108"/>
        <label>3</label>
    </ligand>
</feature>
<feature type="binding site" evidence="3">
    <location>
        <position position="1042"/>
    </location>
    <ligand>
        <name>Ca(2+)</name>
        <dbReference type="ChEBI" id="CHEBI:29108"/>
        <label>4</label>
    </ligand>
</feature>
<feature type="binding site" evidence="3">
    <location>
        <position position="1145"/>
    </location>
    <ligand>
        <name>Ca(2+)</name>
        <dbReference type="ChEBI" id="CHEBI:29108"/>
        <label>3</label>
    </ligand>
</feature>
<feature type="binding site" evidence="3">
    <location>
        <position position="1146"/>
    </location>
    <ligand>
        <name>Ca(2+)</name>
        <dbReference type="ChEBI" id="CHEBI:29108"/>
        <label>3</label>
    </ligand>
</feature>
<feature type="binding site" evidence="3">
    <location>
        <position position="1430"/>
    </location>
    <ligand>
        <name>Ca(2+)</name>
        <dbReference type="ChEBI" id="CHEBI:29108"/>
        <label>5</label>
    </ligand>
</feature>
<feature type="binding site" evidence="3">
    <location>
        <position position="1432"/>
    </location>
    <ligand>
        <name>Ca(2+)</name>
        <dbReference type="ChEBI" id="CHEBI:29108"/>
        <label>5</label>
    </ligand>
</feature>
<feature type="binding site" evidence="3">
    <location>
        <position position="1444"/>
    </location>
    <ligand>
        <name>Ca(2+)</name>
        <dbReference type="ChEBI" id="CHEBI:29108"/>
        <label>6</label>
    </ligand>
</feature>
<feature type="binding site" evidence="3">
    <location>
        <position position="1446"/>
    </location>
    <ligand>
        <name>Ca(2+)</name>
        <dbReference type="ChEBI" id="CHEBI:29108"/>
        <label>6</label>
    </ligand>
</feature>
<feature type="binding site" evidence="3">
    <location>
        <position position="1448"/>
    </location>
    <ligand>
        <name>Ca(2+)</name>
        <dbReference type="ChEBI" id="CHEBI:29108"/>
        <label>6</label>
    </ligand>
</feature>
<feature type="binding site" evidence="3">
    <location>
        <position position="1450"/>
    </location>
    <ligand>
        <name>Ca(2+)</name>
        <dbReference type="ChEBI" id="CHEBI:29108"/>
        <label>6</label>
    </ligand>
</feature>
<feature type="binding site" evidence="3">
    <location>
        <position position="1480"/>
    </location>
    <ligand>
        <name>Ca(2+)</name>
        <dbReference type="ChEBI" id="CHEBI:29108"/>
        <label>5</label>
    </ligand>
</feature>
<feature type="binding site" evidence="3">
    <location>
        <position position="1495"/>
    </location>
    <ligand>
        <name>Ca(2+)</name>
        <dbReference type="ChEBI" id="CHEBI:29108"/>
        <label>6</label>
    </ligand>
</feature>
<feature type="binding site" evidence="3">
    <location>
        <position position="1585"/>
    </location>
    <ligand>
        <name>Ca(2+)</name>
        <dbReference type="ChEBI" id="CHEBI:29108"/>
        <label>5</label>
    </ligand>
</feature>
<feature type="site" description="Cleavage; site 1" evidence="3">
    <location>
        <begin position="228"/>
        <end position="229"/>
    </location>
</feature>
<feature type="site" description="Cleavage; site 2" evidence="3">
    <location>
        <begin position="737"/>
        <end position="738"/>
    </location>
</feature>
<feature type="site" description="Cleavage; site 3" evidence="3">
    <location>
        <begin position="1155"/>
        <end position="1156"/>
    </location>
</feature>
<feature type="site" description="Cleavage; site 4" evidence="3">
    <location>
        <begin position="1290"/>
        <end position="1291"/>
    </location>
</feature>
<feature type="mutagenesis site" description="Loss of activity." evidence="8">
    <original>CC</original>
    <variation>AA</variation>
    <location>
        <begin position="476"/>
        <end position="477"/>
    </location>
</feature>
<feature type="mutagenesis site" description="No effect on activity." evidence="8">
    <original>C</original>
    <variation>A</variation>
    <location>
        <position position="476"/>
    </location>
</feature>
<feature type="mutagenesis site" description="Loss of activity." evidence="8">
    <original>C</original>
    <variation>A</variation>
    <location>
        <position position="477"/>
    </location>
</feature>
<reference key="1">
    <citation type="journal article" date="2008" name="DNA Res.">
        <title>Determination of the genome sequence of Porphyromonas gingivalis strain ATCC 33277 and genomic comparison with strain W83 revealed extensive genome rearrangements in P. gingivalis.</title>
        <authorList>
            <person name="Naito M."/>
            <person name="Hirakawa H."/>
            <person name="Yamashita A."/>
            <person name="Ohara N."/>
            <person name="Shoji M."/>
            <person name="Yukitake H."/>
            <person name="Nakayama K."/>
            <person name="Toh H."/>
            <person name="Yoshimura F."/>
            <person name="Kuhara S."/>
            <person name="Hattori M."/>
            <person name="Hayashi T."/>
            <person name="Nakayama K."/>
        </authorList>
    </citation>
    <scope>NUCLEOTIDE SEQUENCE [LARGE SCALE GENOMIC DNA]</scope>
    <source>
        <strain>ATCC 33277 / DSM 20709 / CIP 103683 / JCM 12257 / NCTC 11834 / 2561</strain>
    </source>
</reference>
<reference evidence="11" key="2">
    <citation type="journal article" date="1998" name="J. Biochem.">
        <title>Biochemical and functional properties of lysine-specific cysteine proteinase (Lys-gingipain) as a virulence factor of Porphyromonas gingivalis in periodontal disease.</title>
        <authorList>
            <person name="Abe N."/>
            <person name="Kadowaki T."/>
            <person name="Okamoto K."/>
            <person name="Nakayama K."/>
            <person name="Ohishi M."/>
            <person name="Yamamoto K."/>
        </authorList>
    </citation>
    <scope>FUNCTION</scope>
    <scope>CATALYTIC ACTIVITY</scope>
    <scope>ACTIVITY REGULATION</scope>
    <scope>BIOPHYSICOCHEMICAL PROPERTIES</scope>
</reference>
<reference evidence="11" key="3">
    <citation type="journal article" date="2004" name="Biol. Chem.">
        <title>Roles of Arg- and Lys-gingipains in coaggregation of Porphyromonas gingivalis: identification of its responsible molecules in translation products of rgpA, kgp, and hagA genes.</title>
        <authorList>
            <person name="Abe N."/>
            <person name="Baba A."/>
            <person name="Takii R."/>
            <person name="Nakayama K."/>
            <person name="Kamaguchi A."/>
            <person name="Shibata Y."/>
            <person name="Abiko Y."/>
            <person name="Okamoto K."/>
            <person name="Kadowaki T."/>
            <person name="Yamamoto K."/>
        </authorList>
    </citation>
    <scope>FUNCTION</scope>
</reference>
<reference evidence="11" key="4">
    <citation type="journal article" date="2004" name="J. Clin. Microbiol.">
        <title>Distribution of Porphyromonas gingivalis biotypes defined by alleles of the kgp (Lys-gingipain) gene.</title>
        <authorList>
            <person name="Nadkarni M.A."/>
            <person name="Nguyen K.A."/>
            <person name="Chapple C.C."/>
            <person name="DeCarlo A.A."/>
            <person name="Jacques N.A."/>
            <person name="Hunter N."/>
        </authorList>
    </citation>
    <scope>POLYMORPHISM</scope>
</reference>
<reference evidence="11" key="5">
    <citation type="journal article" date="2008" name="Arch. Oral Biol.">
        <title>Determination of active site of lysine-specific cysteine proteinase (Lys-gingipain) by use of a Porphyromonas gingivalis plasmid system.</title>
        <authorList>
            <person name="Ishida Y."/>
            <person name="Hu J."/>
            <person name="Sakai E."/>
            <person name="Kadowaki T."/>
            <person name="Yamamoto K."/>
            <person name="Tsukuba T."/>
            <person name="Kato Y."/>
            <person name="Nakayama K."/>
            <person name="Okamoto K."/>
        </authorList>
    </citation>
    <scope>ACTIVE SITE</scope>
    <scope>MUTAGENESIS OF CYS-476; 476-CYS-CYS-477 AND CYS-477</scope>
    <scope>CATALYTIC ACTIVITY</scope>
</reference>
<name>KGP_PORG3</name>
<gene>
    <name evidence="12" type="primary">kgp</name>
    <name type="ordered locus">PGN_1728</name>
</gene>
<accession>B2RLK2</accession>
<keyword id="KW-0106">Calcium</keyword>
<keyword id="KW-0378">Hydrolase</keyword>
<keyword id="KW-0479">Metal-binding</keyword>
<keyword id="KW-0645">Protease</keyword>
<keyword id="KW-0964">Secreted</keyword>
<keyword id="KW-0732">Signal</keyword>
<keyword id="KW-0788">Thiol protease</keyword>
<keyword id="KW-0843">Virulence</keyword>
<keyword id="KW-0865">Zymogen</keyword>
<evidence type="ECO:0000250" key="1">
    <source>
        <dbReference type="UniProtKB" id="P72194"/>
    </source>
</evidence>
<evidence type="ECO:0000250" key="2">
    <source>
        <dbReference type="UniProtKB" id="P95493"/>
    </source>
</evidence>
<evidence type="ECO:0000250" key="3">
    <source>
        <dbReference type="UniProtKB" id="Q51817"/>
    </source>
</evidence>
<evidence type="ECO:0000255" key="4"/>
<evidence type="ECO:0000256" key="5">
    <source>
        <dbReference type="SAM" id="MobiDB-lite"/>
    </source>
</evidence>
<evidence type="ECO:0000269" key="6">
    <source>
    </source>
</evidence>
<evidence type="ECO:0000269" key="7">
    <source>
    </source>
</evidence>
<evidence type="ECO:0000269" key="8">
    <source>
    </source>
</evidence>
<evidence type="ECO:0000269" key="9">
    <source>
    </source>
</evidence>
<evidence type="ECO:0000303" key="10">
    <source>
    </source>
</evidence>
<evidence type="ECO:0000305" key="11"/>
<evidence type="ECO:0000312" key="12">
    <source>
        <dbReference type="EMBL" id="BAG34247.1"/>
    </source>
</evidence>
<organism>
    <name type="scientific">Porphyromonas gingivalis (strain ATCC 33277 / DSM 20709 / CIP 103683 / JCM 12257 / NCTC 11834 / 2561)</name>
    <dbReference type="NCBI Taxonomy" id="431947"/>
    <lineage>
        <taxon>Bacteria</taxon>
        <taxon>Pseudomonadati</taxon>
        <taxon>Bacteroidota</taxon>
        <taxon>Bacteroidia</taxon>
        <taxon>Bacteroidales</taxon>
        <taxon>Porphyromonadaceae</taxon>
        <taxon>Porphyromonas</taxon>
    </lineage>
</organism>
<dbReference type="EC" id="3.4.22.47" evidence="8 9"/>
<dbReference type="EMBL" id="AP009380">
    <property type="protein sequence ID" value="BAG34247.1"/>
    <property type="molecule type" value="Genomic_DNA"/>
</dbReference>
<dbReference type="RefSeq" id="WP_012458488.1">
    <property type="nucleotide sequence ID" value="NC_010729.1"/>
</dbReference>
<dbReference type="SMR" id="B2RLK2"/>
<dbReference type="BindingDB" id="B2RLK2"/>
<dbReference type="ChEMBL" id="CHEMBL3308977"/>
<dbReference type="MEROPS" id="C25.002"/>
<dbReference type="GeneID" id="29256891"/>
<dbReference type="KEGG" id="pgn:PGN_1728"/>
<dbReference type="eggNOG" id="COG1974">
    <property type="taxonomic scope" value="Bacteria"/>
</dbReference>
<dbReference type="HOGENOM" id="CLU_240727_0_0_10"/>
<dbReference type="OrthoDB" id="1014348at2"/>
<dbReference type="BioCyc" id="MetaCyc:HMPREF1322_RS02410-MONOMER"/>
<dbReference type="BioCyc" id="PGIN431947:G1G2V-1940-MONOMER"/>
<dbReference type="BRENDA" id="3.4.22.47">
    <property type="organism ID" value="756"/>
</dbReference>
<dbReference type="PHI-base" id="PHI:11116"/>
<dbReference type="PHI-base" id="PHI:7889"/>
<dbReference type="PHI-base" id="PHI:9708"/>
<dbReference type="Proteomes" id="UP000008842">
    <property type="component" value="Chromosome"/>
</dbReference>
<dbReference type="GO" id="GO:0005576">
    <property type="term" value="C:extracellular region"/>
    <property type="evidence" value="ECO:0000250"/>
    <property type="project" value="UniProtKB"/>
</dbReference>
<dbReference type="GO" id="GO:0005509">
    <property type="term" value="F:calcium ion binding"/>
    <property type="evidence" value="ECO:0000250"/>
    <property type="project" value="UniProtKB"/>
</dbReference>
<dbReference type="GO" id="GO:0004197">
    <property type="term" value="F:cysteine-type endopeptidase activity"/>
    <property type="evidence" value="ECO:0000250"/>
    <property type="project" value="UniProtKB"/>
</dbReference>
<dbReference type="GO" id="GO:0044179">
    <property type="term" value="P:hemolysis in another organism"/>
    <property type="evidence" value="ECO:0000250"/>
    <property type="project" value="UniProtKB"/>
</dbReference>
<dbReference type="GO" id="GO:0006508">
    <property type="term" value="P:proteolysis"/>
    <property type="evidence" value="ECO:0000250"/>
    <property type="project" value="UniProtKB"/>
</dbReference>
<dbReference type="GO" id="GO:0141174">
    <property type="term" value="P:symbiont-mediated suppression of host anti-inflammatory cytokine signaling"/>
    <property type="evidence" value="ECO:0000269"/>
    <property type="project" value="SigSci"/>
</dbReference>
<dbReference type="FunFam" id="2.60.40.3800:FF:000002">
    <property type="entry name" value="Lys-gingipain W83"/>
    <property type="match status" value="1"/>
</dbReference>
<dbReference type="FunFam" id="3.40.50.1460:FF:000023">
    <property type="entry name" value="Lys-gingipain W83"/>
    <property type="match status" value="1"/>
</dbReference>
<dbReference type="Gene3D" id="2.60.120.200">
    <property type="match status" value="3"/>
</dbReference>
<dbReference type="Gene3D" id="2.60.40.3800">
    <property type="match status" value="1"/>
</dbReference>
<dbReference type="Gene3D" id="3.40.50.1460">
    <property type="match status" value="1"/>
</dbReference>
<dbReference type="Gene3D" id="3.40.50.10390">
    <property type="entry name" value="Gingipain r, domain 1"/>
    <property type="match status" value="1"/>
</dbReference>
<dbReference type="Gene3D" id="2.60.40.10">
    <property type="entry name" value="Immunoglobulins"/>
    <property type="match status" value="4"/>
</dbReference>
<dbReference type="InterPro" id="IPR029030">
    <property type="entry name" value="Caspase-like_dom_sf"/>
</dbReference>
<dbReference type="InterPro" id="IPR011628">
    <property type="entry name" value="Cleaved_adhesin"/>
</dbReference>
<dbReference type="InterPro" id="IPR001769">
    <property type="entry name" value="Gingipain"/>
</dbReference>
<dbReference type="InterPro" id="IPR029031">
    <property type="entry name" value="Gingipain_N_sf"/>
</dbReference>
<dbReference type="InterPro" id="IPR038490">
    <property type="entry name" value="Gingipain_propep_sf"/>
</dbReference>
<dbReference type="InterPro" id="IPR013783">
    <property type="entry name" value="Ig-like_fold"/>
</dbReference>
<dbReference type="InterPro" id="IPR018832">
    <property type="entry name" value="Pept_C25_gingipain_C"/>
</dbReference>
<dbReference type="InterPro" id="IPR005536">
    <property type="entry name" value="Peptidase_C25_Ig-like_domain"/>
</dbReference>
<dbReference type="InterPro" id="IPR012600">
    <property type="entry name" value="Propeptide_C25"/>
</dbReference>
<dbReference type="NCBIfam" id="NF038128">
    <property type="entry name" value="choice_anch_J"/>
    <property type="match status" value="3"/>
</dbReference>
<dbReference type="Pfam" id="PF07675">
    <property type="entry name" value="Cleaved_Adhesin"/>
    <property type="match status" value="3"/>
</dbReference>
<dbReference type="Pfam" id="PF10365">
    <property type="entry name" value="DUF2436"/>
    <property type="match status" value="1"/>
</dbReference>
<dbReference type="Pfam" id="PF01364">
    <property type="entry name" value="Peptidase_C25"/>
    <property type="match status" value="1"/>
</dbReference>
<dbReference type="Pfam" id="PF03785">
    <property type="entry name" value="Peptidase_C25_C"/>
    <property type="match status" value="1"/>
</dbReference>
<dbReference type="Pfam" id="PF08126">
    <property type="entry name" value="Propeptide_C25"/>
    <property type="match status" value="1"/>
</dbReference>
<dbReference type="SUPFAM" id="SSF52129">
    <property type="entry name" value="Caspase-like"/>
    <property type="match status" value="1"/>
</dbReference>
<sequence>MRKLLLLIAASLLGVGLYAQSAKIKLDAPTTRTTCTNNSFKQFDASFSFNEVELTKVETKGGTFASVSIPGAFPTGEVGSPEVPAVRKLIAVPVGATPVVRVKSFTEQVYSLNQYGSEKLMPHQPSMSKSDDPEKVPFVYNAAAYARKGFVGQELTQVEMLGTMRGVRIAALTINPVQYDVVANQLKVRNNIEIEVSFQGADEVATQRLYDASFSPYFETAYKQLFNRDVYTDHGDLYNTPVRMLVVAGAKFKEALKPWLTWKAQKGFYLDVHYTDEAEVGTTNASIKAFIHKKYNDGLAASAAPVFLALVGDTDVISGEKGKKTKKVTDLYYSAVDGDYFPEMYTFRMSASSPEELTNIIDKVLMYEKATMPDKSYLEKALLIAGADSYWNPKIGQQTIKYAVQYYYNQDHGYTDVYSYPKAPYTGCYSHLNTGVGFANYTAHGSETSWADPSLTATQVKALTNKDKYFLAIGNCCVTAQFDYPQPCFGEVMTRVKEKGAYAYIGSSPNSYWGEDYYWSVGANAVFGVQPTFEGTSMGSYDATFLEDSYNTVNSIMWAGNLAATHAGNIGNITHIGAHYYWEAYHVLGDGSVMPYRAMPKTNTYTLPASLPQNQASYSIQASAGSYVAISKDGVLYGTGVANASGVATVNMTKQITENGNYDVVITRSNYLPVIKQIQAGEPSPYQPVSNLTATTQGQKVTLKWDAPSAKKAEASREVKRIGDGLFVTIEPANDVRANEAKVVLAADNVWGDNTGYQFLLDADHNTFGSVIPATGPLFTGTASSNLYSANFEYLIPANADPVVTTQNIIVTGQGEVVIPGGVYDYCITNPEPASGKMWIAGDGGNQPARYDDFTFEAGKKYTFTMRRAGMGDGTDMEVEDDSPASYTYTVYRDGTKIQEGLTATTFEEDGVAAGNHEYCVEVKYTAGVSPKVCKDVTVEGSNEFAPVQNLTGSAVGQKVTLKWDAPNGTPNPNPNPNPGTTTLSESFENGIPASWKTIDADGDGHGWKPGNAPGIAGYNSNGCVYSESFGLGGIGVLTPDNYLITPALDLPNGGKLTFWVCAQDANYASEHYAVYASSTGNDASNFTNALLEETITAKGVRSPEAIRGRIQGTWRQKTVDLPAGTKYVAFRHFQSTDMFYIDLDEVEIKANGKRADFTETFESSTHGEAPAEWTTIDADGDGQDWLCLSSGQLDWLTAHGGTNVVASFSWNGMALNPDNYLISKDVTGATKVKYYYAVNDGFPGDHYAVMISKTGTNAGDFTVVFEETPNGINKGGARFGLSTEANGAKPQSVWIERTVDLPAGTKYVAFRHYNCSDLNYILLDDIQFTMGGSPTPTDYTYTVYRDGTKIKEGLTETTFEEDGVATGNHEYCVEVKYTAGVSPKVCVNVTINPTQFNPVKNLKAQPDGGDVVLKWEAPSGKRGELLNEDFEGDAIPTGWTALDADGDGNNWDITLNEFTRGERHVLSPLRASNVAISYSSLLQGQEYLPLTPNNFLITPKVEGAKKITYKVGSPGLPQWSHDHYALCISKSGTAAADFEVIFEETMTYTQGGANLTREKDLPAGTKYVAFRHYNCTDVLGIMIDDVVITGEGEGPSYTYTVYRDGTKIQEGLTETTYRDAGMSAQSHEYCVEVKYAAGVSPKVCVDYIPDGVADVTAQKPYTLTVVGKTITVTCQGEAMIYDMNGRRLAAGRNTVVYTAQGGYYAVMVVVDGKSYVEKLAIK</sequence>